<sequence length="39" mass="4528">MDRNQNPNRQPVELNRTSLYLGLLLIAVLGILFSSYFFN</sequence>
<dbReference type="EMBL" id="CP000806">
    <property type="protein sequence ID" value="ACB50654.1"/>
    <property type="molecule type" value="Genomic_DNA"/>
</dbReference>
<dbReference type="RefSeq" id="WP_009544126.1">
    <property type="nucleotide sequence ID" value="NC_010546.1"/>
</dbReference>
<dbReference type="SMR" id="B1WVR7"/>
<dbReference type="STRING" id="43989.cce_1304"/>
<dbReference type="KEGG" id="cyt:cce_1304"/>
<dbReference type="eggNOG" id="ENOG5033AKP">
    <property type="taxonomic scope" value="Bacteria"/>
</dbReference>
<dbReference type="HOGENOM" id="CLU_214425_0_0_3"/>
<dbReference type="Proteomes" id="UP000001203">
    <property type="component" value="Chromosome circular"/>
</dbReference>
<dbReference type="GO" id="GO:0009539">
    <property type="term" value="C:photosystem II reaction center"/>
    <property type="evidence" value="ECO:0007669"/>
    <property type="project" value="InterPro"/>
</dbReference>
<dbReference type="GO" id="GO:0031676">
    <property type="term" value="C:plasma membrane-derived thylakoid membrane"/>
    <property type="evidence" value="ECO:0007669"/>
    <property type="project" value="UniProtKB-SubCell"/>
</dbReference>
<dbReference type="GO" id="GO:0015979">
    <property type="term" value="P:photosynthesis"/>
    <property type="evidence" value="ECO:0007669"/>
    <property type="project" value="UniProtKB-UniRule"/>
</dbReference>
<dbReference type="HAMAP" id="MF_01317">
    <property type="entry name" value="PSII_PsbL"/>
    <property type="match status" value="1"/>
</dbReference>
<dbReference type="InterPro" id="IPR003372">
    <property type="entry name" value="PSII_PsbL"/>
</dbReference>
<dbReference type="InterPro" id="IPR037266">
    <property type="entry name" value="PSII_PsbL_sf"/>
</dbReference>
<dbReference type="NCBIfam" id="NF001972">
    <property type="entry name" value="PRK00753.1"/>
    <property type="match status" value="1"/>
</dbReference>
<dbReference type="Pfam" id="PF02419">
    <property type="entry name" value="PsbL"/>
    <property type="match status" value="1"/>
</dbReference>
<dbReference type="SUPFAM" id="SSF161017">
    <property type="entry name" value="Photosystem II reaction center protein L, PsbL"/>
    <property type="match status" value="1"/>
</dbReference>
<comment type="function">
    <text evidence="1">One of the components of the core complex of photosystem II (PSII). PSII is a light-driven water:plastoquinone oxidoreductase that uses light energy to abstract electrons from H(2)O, generating O(2) and a proton gradient subsequently used for ATP formation. It consists of a core antenna complex that captures photons, and an electron transfer chain that converts photonic excitation into a charge separation. This subunit is found at the monomer-monomer interface and is required for correct PSII assembly and/or dimerization.</text>
</comment>
<comment type="subunit">
    <text evidence="1">PSII is composed of 1 copy each of membrane proteins PsbA, PsbB, PsbC, PsbD, PsbE, PsbF, PsbH, PsbI, PsbJ, PsbK, PsbL, PsbM, PsbT, PsbX, PsbY, PsbZ, Psb30/Ycf12, peripheral proteins PsbO, CyanoQ (PsbQ), PsbU, PsbV and a large number of cofactors. It forms dimeric complexes.</text>
</comment>
<comment type="subcellular location">
    <subcellularLocation>
        <location evidence="1">Cellular thylakoid membrane</location>
        <topology evidence="1">Single-pass membrane protein</topology>
    </subcellularLocation>
</comment>
<comment type="similarity">
    <text evidence="1">Belongs to the PsbL family.</text>
</comment>
<name>PSBL_CROS5</name>
<protein>
    <recommendedName>
        <fullName evidence="1">Photosystem II reaction center protein L</fullName>
        <shortName evidence="1">PSII-L</shortName>
    </recommendedName>
</protein>
<accession>B1WVR7</accession>
<feature type="chain" id="PRO_1000165648" description="Photosystem II reaction center protein L">
    <location>
        <begin position="1"/>
        <end position="39"/>
    </location>
</feature>
<feature type="transmembrane region" description="Helical" evidence="1">
    <location>
        <begin position="18"/>
        <end position="38"/>
    </location>
</feature>
<gene>
    <name evidence="1" type="primary">psbL</name>
    <name type="ordered locus">cce_1304</name>
</gene>
<organism>
    <name type="scientific">Crocosphaera subtropica (strain ATCC 51142 / BH68)</name>
    <name type="common">Cyanothece sp. (strain ATCC 51142)</name>
    <dbReference type="NCBI Taxonomy" id="43989"/>
    <lineage>
        <taxon>Bacteria</taxon>
        <taxon>Bacillati</taxon>
        <taxon>Cyanobacteriota</taxon>
        <taxon>Cyanophyceae</taxon>
        <taxon>Oscillatoriophycideae</taxon>
        <taxon>Chroococcales</taxon>
        <taxon>Aphanothecaceae</taxon>
        <taxon>Crocosphaera</taxon>
        <taxon>Crocosphaera subtropica</taxon>
    </lineage>
</organism>
<keyword id="KW-0472">Membrane</keyword>
<keyword id="KW-0602">Photosynthesis</keyword>
<keyword id="KW-0604">Photosystem II</keyword>
<keyword id="KW-0674">Reaction center</keyword>
<keyword id="KW-1185">Reference proteome</keyword>
<keyword id="KW-0793">Thylakoid</keyword>
<keyword id="KW-0812">Transmembrane</keyword>
<keyword id="KW-1133">Transmembrane helix</keyword>
<evidence type="ECO:0000255" key="1">
    <source>
        <dbReference type="HAMAP-Rule" id="MF_01317"/>
    </source>
</evidence>
<reference key="1">
    <citation type="journal article" date="2008" name="Proc. Natl. Acad. Sci. U.S.A.">
        <title>The genome of Cyanothece 51142, a unicellular diazotrophic cyanobacterium important in the marine nitrogen cycle.</title>
        <authorList>
            <person name="Welsh E.A."/>
            <person name="Liberton M."/>
            <person name="Stoeckel J."/>
            <person name="Loh T."/>
            <person name="Elvitigala T."/>
            <person name="Wang C."/>
            <person name="Wollam A."/>
            <person name="Fulton R.S."/>
            <person name="Clifton S.W."/>
            <person name="Jacobs J.M."/>
            <person name="Aurora R."/>
            <person name="Ghosh B.K."/>
            <person name="Sherman L.A."/>
            <person name="Smith R.D."/>
            <person name="Wilson R.K."/>
            <person name="Pakrasi H.B."/>
        </authorList>
    </citation>
    <scope>NUCLEOTIDE SEQUENCE [LARGE SCALE GENOMIC DNA]</scope>
    <source>
        <strain>ATCC 51142 / BH68</strain>
    </source>
</reference>
<proteinExistence type="inferred from homology"/>